<proteinExistence type="evidence at protein level"/>
<keyword id="KW-0002">3D-structure</keyword>
<keyword id="KW-1238">Degradation of host capsule during virus entry</keyword>
<keyword id="KW-1235">Degradation of host cell envelope components during virus entry</keyword>
<keyword id="KW-0326">Glycosidase</keyword>
<keyword id="KW-0378">Hydrolase</keyword>
<keyword id="KW-0946">Virion</keyword>
<keyword id="KW-1160">Virus entry into host cell</keyword>
<organism>
    <name type="scientific">Streptococcus pyogenes phage H4489A</name>
    <dbReference type="NCBI Taxonomy" id="12366"/>
    <lineage>
        <taxon>Viruses</taxon>
    </lineage>
</organism>
<organismHost>
    <name type="scientific">Streptococcus pyogenes</name>
    <dbReference type="NCBI Taxonomy" id="1314"/>
</organismHost>
<evidence type="ECO:0000256" key="1">
    <source>
        <dbReference type="SAM" id="MobiDB-lite"/>
    </source>
</evidence>
<evidence type="ECO:0000305" key="2"/>
<evidence type="ECO:0007829" key="3">
    <source>
        <dbReference type="PDB" id="6WV2"/>
    </source>
</evidence>
<evidence type="ECO:0007829" key="4">
    <source>
        <dbReference type="PDB" id="6WWX"/>
    </source>
</evidence>
<protein>
    <recommendedName>
        <fullName>Hyaluronoglucosaminidase</fullName>
        <shortName>Hyaluronidase</shortName>
        <ecNumber>3.2.1.35</ecNumber>
    </recommendedName>
</protein>
<dbReference type="EC" id="3.2.1.35"/>
<dbReference type="EMBL" id="M19348">
    <property type="protein sequence ID" value="AAA98101.1"/>
    <property type="molecule type" value="Genomic_DNA"/>
</dbReference>
<dbReference type="PIR" id="A30566">
    <property type="entry name" value="HUBPHA"/>
</dbReference>
<dbReference type="PDB" id="6WV2">
    <property type="method" value="X-ray"/>
    <property type="resolution" value="2.21 A"/>
    <property type="chains" value="A/B/C=87-371"/>
</dbReference>
<dbReference type="PDB" id="6WWX">
    <property type="method" value="X-ray"/>
    <property type="resolution" value="2.20 A"/>
    <property type="chains" value="A/B/C=87-371"/>
</dbReference>
<dbReference type="PDB" id="6WXA">
    <property type="method" value="X-ray"/>
    <property type="resolution" value="2.30 A"/>
    <property type="chains" value="A/B/C=87-371"/>
</dbReference>
<dbReference type="PDB" id="6X3M">
    <property type="method" value="X-ray"/>
    <property type="resolution" value="3.58 A"/>
    <property type="chains" value="A/B/C/D/E/F/G/H/I=1-371"/>
</dbReference>
<dbReference type="PDBsum" id="6WV2"/>
<dbReference type="PDBsum" id="6WWX"/>
<dbReference type="PDBsum" id="6WXA"/>
<dbReference type="PDBsum" id="6X3M"/>
<dbReference type="SMR" id="P15316"/>
<dbReference type="CAZy" id="PL16">
    <property type="family name" value="Polysaccharide Lyase Family 16"/>
</dbReference>
<dbReference type="BRENDA" id="4.2.2.1">
    <property type="organism ID" value="7637"/>
</dbReference>
<dbReference type="GO" id="GO:0044423">
    <property type="term" value="C:virion component"/>
    <property type="evidence" value="ECO:0007669"/>
    <property type="project" value="UniProtKB-KW"/>
</dbReference>
<dbReference type="GO" id="GO:0004415">
    <property type="term" value="F:hyalurononglucosaminidase activity"/>
    <property type="evidence" value="ECO:0007669"/>
    <property type="project" value="UniProtKB-EC"/>
</dbReference>
<dbReference type="GO" id="GO:0045227">
    <property type="term" value="P:capsule polysaccharide biosynthetic process"/>
    <property type="evidence" value="ECO:0007669"/>
    <property type="project" value="InterPro"/>
</dbReference>
<dbReference type="GO" id="GO:0098994">
    <property type="term" value="P:symbiont entry into host cell via disruption of host cell envelope"/>
    <property type="evidence" value="ECO:0007669"/>
    <property type="project" value="UniProtKB-KW"/>
</dbReference>
<dbReference type="GO" id="GO:0098996">
    <property type="term" value="P:symbiont entry into host cell via disruption of host cell glycocalyx"/>
    <property type="evidence" value="ECO:0007669"/>
    <property type="project" value="UniProtKB-KW"/>
</dbReference>
<dbReference type="Gene3D" id="1.20.5.320">
    <property type="entry name" value="6-Phosphogluconate Dehydrogenase, domain 3"/>
    <property type="match status" value="1"/>
</dbReference>
<dbReference type="InterPro" id="IPR009860">
    <property type="entry name" value="Hyaluronidase_bac"/>
</dbReference>
<dbReference type="InterPro" id="IPR041352">
    <property type="entry name" value="Mtd_N"/>
</dbReference>
<dbReference type="Pfam" id="PF07212">
    <property type="entry name" value="Hyaluronidase_1"/>
    <property type="match status" value="1"/>
</dbReference>
<dbReference type="Pfam" id="PF18454">
    <property type="entry name" value="Mtd_N"/>
    <property type="match status" value="1"/>
</dbReference>
<dbReference type="SUPFAM" id="SSF69349">
    <property type="entry name" value="Phage fibre proteins"/>
    <property type="match status" value="1"/>
</dbReference>
<accession>P15316</accession>
<comment type="function">
    <text>The hyaluronidase of this bacteriophage mediates the penetration of the hyaluronic capsule of Streptococcus pyogenes.</text>
</comment>
<comment type="catalytic activity">
    <reaction>
        <text>Random hydrolysis of (1-&gt;4)-linkages between N-acetyl-beta-D-glucosamine and D-glucuronate residues in hyaluronate.</text>
        <dbReference type="EC" id="3.2.1.35"/>
    </reaction>
</comment>
<comment type="subcellular location">
    <subcellularLocation>
        <location evidence="2">Virion</location>
    </subcellularLocation>
</comment>
<comment type="similarity">
    <text evidence="2">Belongs to the glycosyl hydrolase 69 family.</text>
</comment>
<gene>
    <name type="primary">HYLP1</name>
    <name type="synonym">HYLP</name>
</gene>
<sequence>MTENIPLRVQFKRMSADEWARSDVILLEGEIGFETDTGFAKFGDGQNTFSKLKYLTGPKGPKGDTGLQGKTGGTGPRGPAGKPGTTDYDQLQNKPDLGAFAQKEETNSKITKLESSKADKSAVYSKAESKIELDKKLSLTGGIVTGQLQFKPNKSGIKPSSSVGGAINIDMSKSEGAAMVMYTNKDTTDGPLMILRSDKDTFDQSAQFVDYSGKTNAVNIVMRQPSAPNFSSALNITSANEGGSAMQIRGVEKALGTLKITHENPNVEAKYDENAAALSIDIVKKQKGGKGTAAQGIYINSTSGTAGKMLRIRNKNEDKFYVGPDGGFHSGANSTVAGNLTVKDPTSGKHAATKDYVDEKIAELKKLILKK</sequence>
<reference key="1">
    <citation type="journal article" date="1989" name="Infect. Immun.">
        <title>Sequence analysis and expression in Escherichia coli of the hyaluronidase gene of Streptococcus pyogenes bacteriophage H4489A.</title>
        <authorList>
            <person name="Hynes W.L."/>
            <person name="Ferretti J.J."/>
        </authorList>
    </citation>
    <scope>NUCLEOTIDE SEQUENCE [GENOMIC DNA]</scope>
</reference>
<feature type="chain" id="PRO_0000057723" description="Hyaluronoglucosaminidase">
    <location>
        <begin position="1"/>
        <end position="371"/>
    </location>
</feature>
<feature type="region of interest" description="Disordered" evidence="1">
    <location>
        <begin position="54"/>
        <end position="88"/>
    </location>
</feature>
<feature type="compositionally biased region" description="Gly residues" evidence="1">
    <location>
        <begin position="69"/>
        <end position="78"/>
    </location>
</feature>
<feature type="helix" evidence="4">
    <location>
        <begin position="107"/>
        <end position="116"/>
    </location>
</feature>
<feature type="helix" evidence="3">
    <location>
        <begin position="120"/>
        <end position="122"/>
    </location>
</feature>
<feature type="helix" evidence="4">
    <location>
        <begin position="126"/>
        <end position="133"/>
    </location>
</feature>
<feature type="strand" evidence="4">
    <location>
        <begin position="142"/>
        <end position="144"/>
    </location>
</feature>
<feature type="strand" evidence="4">
    <location>
        <begin position="148"/>
        <end position="150"/>
    </location>
</feature>
<feature type="strand" evidence="4">
    <location>
        <begin position="153"/>
        <end position="155"/>
    </location>
</feature>
<feature type="turn" evidence="4">
    <location>
        <begin position="161"/>
        <end position="163"/>
    </location>
</feature>
<feature type="strand" evidence="4">
    <location>
        <begin position="165"/>
        <end position="170"/>
    </location>
</feature>
<feature type="strand" evidence="4">
    <location>
        <begin position="178"/>
        <end position="183"/>
    </location>
</feature>
<feature type="strand" evidence="4">
    <location>
        <begin position="192"/>
        <end position="197"/>
    </location>
</feature>
<feature type="strand" evidence="4">
    <location>
        <begin position="206"/>
        <end position="211"/>
    </location>
</feature>
<feature type="strand" evidence="4">
    <location>
        <begin position="213"/>
        <end position="215"/>
    </location>
</feature>
<feature type="strand" evidence="4">
    <location>
        <begin position="217"/>
        <end position="222"/>
    </location>
</feature>
<feature type="strand" evidence="4">
    <location>
        <begin position="233"/>
        <end position="238"/>
    </location>
</feature>
<feature type="strand" evidence="4">
    <location>
        <begin position="245"/>
        <end position="250"/>
    </location>
</feature>
<feature type="strand" evidence="4">
    <location>
        <begin position="253"/>
        <end position="263"/>
    </location>
</feature>
<feature type="strand" evidence="4">
    <location>
        <begin position="265"/>
        <end position="268"/>
    </location>
</feature>
<feature type="turn" evidence="4">
    <location>
        <begin position="269"/>
        <end position="274"/>
    </location>
</feature>
<feature type="strand" evidence="4">
    <location>
        <begin position="276"/>
        <end position="283"/>
    </location>
</feature>
<feature type="turn" evidence="4">
    <location>
        <begin position="286"/>
        <end position="288"/>
    </location>
</feature>
<feature type="strand" evidence="4">
    <location>
        <begin position="295"/>
        <end position="300"/>
    </location>
</feature>
<feature type="strand" evidence="4">
    <location>
        <begin position="305"/>
        <end position="307"/>
    </location>
</feature>
<feature type="strand" evidence="4">
    <location>
        <begin position="309"/>
        <end position="314"/>
    </location>
</feature>
<feature type="strand" evidence="4">
    <location>
        <begin position="317"/>
        <end position="322"/>
    </location>
</feature>
<feature type="strand" evidence="4">
    <location>
        <begin position="328"/>
        <end position="330"/>
    </location>
</feature>
<feature type="strand" evidence="4">
    <location>
        <begin position="334"/>
        <end position="338"/>
    </location>
</feature>
<feature type="helix" evidence="4">
    <location>
        <begin position="354"/>
        <end position="371"/>
    </location>
</feature>
<name>HYLP1_BPH44</name>